<dbReference type="EMBL" id="AK001239">
    <property type="protein sequence ID" value="BAA91575.1"/>
    <property type="molecule type" value="mRNA"/>
</dbReference>
<dbReference type="EMBL" id="AK300500">
    <property type="protein sequence ID" value="BAG62214.1"/>
    <property type="molecule type" value="mRNA"/>
</dbReference>
<dbReference type="EMBL" id="AK222716">
    <property type="protein sequence ID" value="BAD96436.1"/>
    <property type="molecule type" value="mRNA"/>
</dbReference>
<dbReference type="EMBL" id="AC010655">
    <property type="status" value="NOT_ANNOTATED_CDS"/>
    <property type="molecule type" value="Genomic_DNA"/>
</dbReference>
<dbReference type="EMBL" id="AC018635">
    <property type="status" value="NOT_ANNOTATED_CDS"/>
    <property type="molecule type" value="Genomic_DNA"/>
</dbReference>
<dbReference type="EMBL" id="CH236947">
    <property type="protein sequence ID" value="EAL24314.1"/>
    <property type="molecule type" value="Genomic_DNA"/>
</dbReference>
<dbReference type="EMBL" id="CH471070">
    <property type="protein sequence ID" value="EAW83643.1"/>
    <property type="molecule type" value="Genomic_DNA"/>
</dbReference>
<dbReference type="EMBL" id="BC013889">
    <property type="protein sequence ID" value="AAH13889.1"/>
    <property type="molecule type" value="mRNA"/>
</dbReference>
<dbReference type="CCDS" id="CCDS55159.1">
    <molecule id="Q9NW13-2"/>
</dbReference>
<dbReference type="CCDS" id="CCDS5801.1">
    <molecule id="Q9NW13-1"/>
</dbReference>
<dbReference type="RefSeq" id="NP_001159607.1">
    <molecule id="Q9NW13-2"/>
    <property type="nucleotide sequence ID" value="NM_001166135.2"/>
</dbReference>
<dbReference type="RefSeq" id="NP_060547.2">
    <molecule id="Q9NW13-1"/>
    <property type="nucleotide sequence ID" value="NM_018077.3"/>
</dbReference>
<dbReference type="BioGRID" id="120437">
    <property type="interactions" value="361"/>
</dbReference>
<dbReference type="CORUM" id="Q9NW13"/>
<dbReference type="FunCoup" id="Q9NW13">
    <property type="interactions" value="2692"/>
</dbReference>
<dbReference type="IntAct" id="Q9NW13">
    <property type="interactions" value="247"/>
</dbReference>
<dbReference type="MINT" id="Q9NW13"/>
<dbReference type="STRING" id="9606.ENSP00000223073"/>
<dbReference type="GlyGen" id="Q9NW13">
    <property type="glycosylation" value="1 site, 1 O-linked glycan (1 site)"/>
</dbReference>
<dbReference type="iPTMnet" id="Q9NW13"/>
<dbReference type="PhosphoSitePlus" id="Q9NW13"/>
<dbReference type="SwissPalm" id="Q9NW13"/>
<dbReference type="BioMuta" id="RBM28"/>
<dbReference type="DMDM" id="55976611"/>
<dbReference type="jPOST" id="Q9NW13"/>
<dbReference type="MassIVE" id="Q9NW13"/>
<dbReference type="PaxDb" id="9606-ENSP00000223073"/>
<dbReference type="PeptideAtlas" id="Q9NW13"/>
<dbReference type="ProteomicsDB" id="19642"/>
<dbReference type="ProteomicsDB" id="82886">
    <molecule id="Q9NW13-1"/>
</dbReference>
<dbReference type="Pumba" id="Q9NW13"/>
<dbReference type="Antibodypedia" id="17763">
    <property type="antibodies" value="142 antibodies from 25 providers"/>
</dbReference>
<dbReference type="DNASU" id="55131"/>
<dbReference type="Ensembl" id="ENST00000223073.6">
    <molecule id="Q9NW13-1"/>
    <property type="protein sequence ID" value="ENSP00000223073.1"/>
    <property type="gene ID" value="ENSG00000106344.8"/>
</dbReference>
<dbReference type="Ensembl" id="ENST00000415472.6">
    <molecule id="Q9NW13-2"/>
    <property type="protein sequence ID" value="ENSP00000390517.2"/>
    <property type="gene ID" value="ENSG00000106344.8"/>
</dbReference>
<dbReference type="GeneID" id="55131"/>
<dbReference type="KEGG" id="hsa:55131"/>
<dbReference type="MANE-Select" id="ENST00000223073.6">
    <property type="protein sequence ID" value="ENSP00000223073.1"/>
    <property type="RefSeq nucleotide sequence ID" value="NM_018077.3"/>
    <property type="RefSeq protein sequence ID" value="NP_060547.2"/>
</dbReference>
<dbReference type="UCSC" id="uc011koj.2">
    <molecule id="Q9NW13-1"/>
    <property type="organism name" value="human"/>
</dbReference>
<dbReference type="AGR" id="HGNC:21863"/>
<dbReference type="CTD" id="55131"/>
<dbReference type="DisGeNET" id="55131"/>
<dbReference type="GeneCards" id="RBM28"/>
<dbReference type="HGNC" id="HGNC:21863">
    <property type="gene designation" value="RBM28"/>
</dbReference>
<dbReference type="HPA" id="ENSG00000106344">
    <property type="expression patterns" value="Low tissue specificity"/>
</dbReference>
<dbReference type="MalaCards" id="RBM28"/>
<dbReference type="MIM" id="612074">
    <property type="type" value="gene"/>
</dbReference>
<dbReference type="MIM" id="612079">
    <property type="type" value="phenotype"/>
</dbReference>
<dbReference type="neXtProt" id="NX_Q9NW13"/>
<dbReference type="OpenTargets" id="ENSG00000106344"/>
<dbReference type="Orphanet" id="157954">
    <property type="disease" value="ANE syndrome"/>
</dbReference>
<dbReference type="PharmGKB" id="PA134867266"/>
<dbReference type="VEuPathDB" id="HostDB:ENSG00000106344"/>
<dbReference type="eggNOG" id="KOG0127">
    <property type="taxonomic scope" value="Eukaryota"/>
</dbReference>
<dbReference type="GeneTree" id="ENSGT00550000074976"/>
<dbReference type="HOGENOM" id="CLU_011608_2_0_1"/>
<dbReference type="InParanoid" id="Q9NW13"/>
<dbReference type="OMA" id="FTHRHAL"/>
<dbReference type="OrthoDB" id="439808at2759"/>
<dbReference type="PAN-GO" id="Q9NW13">
    <property type="GO annotations" value="1 GO annotation based on evolutionary models"/>
</dbReference>
<dbReference type="PhylomeDB" id="Q9NW13"/>
<dbReference type="TreeFam" id="TF312798"/>
<dbReference type="PathwayCommons" id="Q9NW13"/>
<dbReference type="Reactome" id="R-HSA-6791226">
    <property type="pathway name" value="Major pathway of rRNA processing in the nucleolus and cytosol"/>
</dbReference>
<dbReference type="SignaLink" id="Q9NW13"/>
<dbReference type="BioGRID-ORCS" id="55131">
    <property type="hits" value="495 hits in 1170 CRISPR screens"/>
</dbReference>
<dbReference type="CD-CODE" id="232F8A39">
    <property type="entry name" value="P-body"/>
</dbReference>
<dbReference type="CD-CODE" id="91857CE7">
    <property type="entry name" value="Nucleolus"/>
</dbReference>
<dbReference type="ChiTaRS" id="RBM28">
    <property type="organism name" value="human"/>
</dbReference>
<dbReference type="GeneWiki" id="RBM28"/>
<dbReference type="GenomeRNAi" id="55131"/>
<dbReference type="Pharos" id="Q9NW13">
    <property type="development level" value="Tbio"/>
</dbReference>
<dbReference type="PRO" id="PR:Q9NW13"/>
<dbReference type="Proteomes" id="UP000005640">
    <property type="component" value="Chromosome 7"/>
</dbReference>
<dbReference type="RNAct" id="Q9NW13">
    <property type="molecule type" value="protein"/>
</dbReference>
<dbReference type="Bgee" id="ENSG00000106344">
    <property type="expression patterns" value="Expressed in sural nerve and 197 other cell types or tissues"/>
</dbReference>
<dbReference type="ExpressionAtlas" id="Q9NW13">
    <property type="expression patterns" value="baseline and differential"/>
</dbReference>
<dbReference type="GO" id="GO:0005730">
    <property type="term" value="C:nucleolus"/>
    <property type="evidence" value="ECO:0000314"/>
    <property type="project" value="HPA"/>
</dbReference>
<dbReference type="GO" id="GO:0005681">
    <property type="term" value="C:spliceosomal complex"/>
    <property type="evidence" value="ECO:0007669"/>
    <property type="project" value="UniProtKB-KW"/>
</dbReference>
<dbReference type="GO" id="GO:0003723">
    <property type="term" value="F:RNA binding"/>
    <property type="evidence" value="ECO:0007005"/>
    <property type="project" value="UniProtKB"/>
</dbReference>
<dbReference type="GO" id="GO:0006397">
    <property type="term" value="P:mRNA processing"/>
    <property type="evidence" value="ECO:0007669"/>
    <property type="project" value="UniProtKB-KW"/>
</dbReference>
<dbReference type="GO" id="GO:0008380">
    <property type="term" value="P:RNA splicing"/>
    <property type="evidence" value="ECO:0007669"/>
    <property type="project" value="UniProtKB-KW"/>
</dbReference>
<dbReference type="CDD" id="cd12413">
    <property type="entry name" value="RRM1_RBM28_like"/>
    <property type="match status" value="1"/>
</dbReference>
<dbReference type="CDD" id="cd12414">
    <property type="entry name" value="RRM2_RBM28_like"/>
    <property type="match status" value="1"/>
</dbReference>
<dbReference type="CDD" id="cd12415">
    <property type="entry name" value="RRM3_RBM28_like"/>
    <property type="match status" value="1"/>
</dbReference>
<dbReference type="CDD" id="cd12416">
    <property type="entry name" value="RRM4_RBM28_like"/>
    <property type="match status" value="1"/>
</dbReference>
<dbReference type="FunFam" id="3.30.70.330:FF:000182">
    <property type="entry name" value="RNA-binding motif protein 28"/>
    <property type="match status" value="1"/>
</dbReference>
<dbReference type="FunFam" id="3.30.70.330:FF:000315">
    <property type="entry name" value="RNA-binding motif protein 28"/>
    <property type="match status" value="1"/>
</dbReference>
<dbReference type="FunFam" id="3.30.70.330:FF:000340">
    <property type="entry name" value="RNA-binding motif protein 28"/>
    <property type="match status" value="1"/>
</dbReference>
<dbReference type="FunFam" id="3.30.70.330:FF:000371">
    <property type="entry name" value="RNA-binding protein 28 isoform X1"/>
    <property type="match status" value="1"/>
</dbReference>
<dbReference type="Gene3D" id="3.30.70.330">
    <property type="match status" value="4"/>
</dbReference>
<dbReference type="InterPro" id="IPR012677">
    <property type="entry name" value="Nucleotide-bd_a/b_plait_sf"/>
</dbReference>
<dbReference type="InterPro" id="IPR035979">
    <property type="entry name" value="RBD_domain_sf"/>
</dbReference>
<dbReference type="InterPro" id="IPR000504">
    <property type="entry name" value="RRM_dom"/>
</dbReference>
<dbReference type="InterPro" id="IPR051945">
    <property type="entry name" value="RRM_MRD1_RNA_proc_ribogen"/>
</dbReference>
<dbReference type="PANTHER" id="PTHR48039">
    <property type="entry name" value="RNA-BINDING MOTIF PROTEIN 14B"/>
    <property type="match status" value="1"/>
</dbReference>
<dbReference type="PANTHER" id="PTHR48039:SF5">
    <property type="entry name" value="RNA-BINDING PROTEIN 28"/>
    <property type="match status" value="1"/>
</dbReference>
<dbReference type="Pfam" id="PF00076">
    <property type="entry name" value="RRM_1"/>
    <property type="match status" value="3"/>
</dbReference>
<dbReference type="SMART" id="SM00360">
    <property type="entry name" value="RRM"/>
    <property type="match status" value="4"/>
</dbReference>
<dbReference type="SUPFAM" id="SSF54928">
    <property type="entry name" value="RNA-binding domain, RBD"/>
    <property type="match status" value="4"/>
</dbReference>
<dbReference type="PROSITE" id="PS50102">
    <property type="entry name" value="RRM"/>
    <property type="match status" value="4"/>
</dbReference>
<reference key="1">
    <citation type="journal article" date="2004" name="Nat. Genet.">
        <title>Complete sequencing and characterization of 21,243 full-length human cDNAs.</title>
        <authorList>
            <person name="Ota T."/>
            <person name="Suzuki Y."/>
            <person name="Nishikawa T."/>
            <person name="Otsuki T."/>
            <person name="Sugiyama T."/>
            <person name="Irie R."/>
            <person name="Wakamatsu A."/>
            <person name="Hayashi K."/>
            <person name="Sato H."/>
            <person name="Nagai K."/>
            <person name="Kimura K."/>
            <person name="Makita H."/>
            <person name="Sekine M."/>
            <person name="Obayashi M."/>
            <person name="Nishi T."/>
            <person name="Shibahara T."/>
            <person name="Tanaka T."/>
            <person name="Ishii S."/>
            <person name="Yamamoto J."/>
            <person name="Saito K."/>
            <person name="Kawai Y."/>
            <person name="Isono Y."/>
            <person name="Nakamura Y."/>
            <person name="Nagahari K."/>
            <person name="Murakami K."/>
            <person name="Yasuda T."/>
            <person name="Iwayanagi T."/>
            <person name="Wagatsuma M."/>
            <person name="Shiratori A."/>
            <person name="Sudo H."/>
            <person name="Hosoiri T."/>
            <person name="Kaku Y."/>
            <person name="Kodaira H."/>
            <person name="Kondo H."/>
            <person name="Sugawara M."/>
            <person name="Takahashi M."/>
            <person name="Kanda K."/>
            <person name="Yokoi T."/>
            <person name="Furuya T."/>
            <person name="Kikkawa E."/>
            <person name="Omura Y."/>
            <person name="Abe K."/>
            <person name="Kamihara K."/>
            <person name="Katsuta N."/>
            <person name="Sato K."/>
            <person name="Tanikawa M."/>
            <person name="Yamazaki M."/>
            <person name="Ninomiya K."/>
            <person name="Ishibashi T."/>
            <person name="Yamashita H."/>
            <person name="Murakawa K."/>
            <person name="Fujimori K."/>
            <person name="Tanai H."/>
            <person name="Kimata M."/>
            <person name="Watanabe M."/>
            <person name="Hiraoka S."/>
            <person name="Chiba Y."/>
            <person name="Ishida S."/>
            <person name="Ono Y."/>
            <person name="Takiguchi S."/>
            <person name="Watanabe S."/>
            <person name="Yosida M."/>
            <person name="Hotuta T."/>
            <person name="Kusano J."/>
            <person name="Kanehori K."/>
            <person name="Takahashi-Fujii A."/>
            <person name="Hara H."/>
            <person name="Tanase T.-O."/>
            <person name="Nomura Y."/>
            <person name="Togiya S."/>
            <person name="Komai F."/>
            <person name="Hara R."/>
            <person name="Takeuchi K."/>
            <person name="Arita M."/>
            <person name="Imose N."/>
            <person name="Musashino K."/>
            <person name="Yuuki H."/>
            <person name="Oshima A."/>
            <person name="Sasaki N."/>
            <person name="Aotsuka S."/>
            <person name="Yoshikawa Y."/>
            <person name="Matsunawa H."/>
            <person name="Ichihara T."/>
            <person name="Shiohata N."/>
            <person name="Sano S."/>
            <person name="Moriya S."/>
            <person name="Momiyama H."/>
            <person name="Satoh N."/>
            <person name="Takami S."/>
            <person name="Terashima Y."/>
            <person name="Suzuki O."/>
            <person name="Nakagawa S."/>
            <person name="Senoh A."/>
            <person name="Mizoguchi H."/>
            <person name="Goto Y."/>
            <person name="Shimizu F."/>
            <person name="Wakebe H."/>
            <person name="Hishigaki H."/>
            <person name="Watanabe T."/>
            <person name="Sugiyama A."/>
            <person name="Takemoto M."/>
            <person name="Kawakami B."/>
            <person name="Yamazaki M."/>
            <person name="Watanabe K."/>
            <person name="Kumagai A."/>
            <person name="Itakura S."/>
            <person name="Fukuzumi Y."/>
            <person name="Fujimori Y."/>
            <person name="Komiyama M."/>
            <person name="Tashiro H."/>
            <person name="Tanigami A."/>
            <person name="Fujiwara T."/>
            <person name="Ono T."/>
            <person name="Yamada K."/>
            <person name="Fujii Y."/>
            <person name="Ozaki K."/>
            <person name="Hirao M."/>
            <person name="Ohmori Y."/>
            <person name="Kawabata A."/>
            <person name="Hikiji T."/>
            <person name="Kobatake N."/>
            <person name="Inagaki H."/>
            <person name="Ikema Y."/>
            <person name="Okamoto S."/>
            <person name="Okitani R."/>
            <person name="Kawakami T."/>
            <person name="Noguchi S."/>
            <person name="Itoh T."/>
            <person name="Shigeta K."/>
            <person name="Senba T."/>
            <person name="Matsumura K."/>
            <person name="Nakajima Y."/>
            <person name="Mizuno T."/>
            <person name="Morinaga M."/>
            <person name="Sasaki M."/>
            <person name="Togashi T."/>
            <person name="Oyama M."/>
            <person name="Hata H."/>
            <person name="Watanabe M."/>
            <person name="Komatsu T."/>
            <person name="Mizushima-Sugano J."/>
            <person name="Satoh T."/>
            <person name="Shirai Y."/>
            <person name="Takahashi Y."/>
            <person name="Nakagawa K."/>
            <person name="Okumura K."/>
            <person name="Nagase T."/>
            <person name="Nomura N."/>
            <person name="Kikuchi H."/>
            <person name="Masuho Y."/>
            <person name="Yamashita R."/>
            <person name="Nakai K."/>
            <person name="Yada T."/>
            <person name="Nakamura Y."/>
            <person name="Ohara O."/>
            <person name="Isogai T."/>
            <person name="Sugano S."/>
        </authorList>
    </citation>
    <scope>NUCLEOTIDE SEQUENCE [LARGE SCALE MRNA] (ISOFORMS 1 AND 2)</scope>
    <source>
        <tissue>Prostate</tissue>
        <tissue>Teratocarcinoma</tissue>
    </source>
</reference>
<reference key="2">
    <citation type="submission" date="2005-04" db="EMBL/GenBank/DDBJ databases">
        <authorList>
            <person name="Suzuki Y."/>
            <person name="Sugano S."/>
            <person name="Totoki Y."/>
            <person name="Toyoda A."/>
            <person name="Takeda T."/>
            <person name="Sakaki Y."/>
            <person name="Tanaka A."/>
            <person name="Yokoyama S."/>
        </authorList>
    </citation>
    <scope>NUCLEOTIDE SEQUENCE [LARGE SCALE MRNA] (ISOFORM 1)</scope>
    <source>
        <tissue>Colon</tissue>
    </source>
</reference>
<reference key="3">
    <citation type="journal article" date="2003" name="Nature">
        <title>The DNA sequence of human chromosome 7.</title>
        <authorList>
            <person name="Hillier L.W."/>
            <person name="Fulton R.S."/>
            <person name="Fulton L.A."/>
            <person name="Graves T.A."/>
            <person name="Pepin K.H."/>
            <person name="Wagner-McPherson C."/>
            <person name="Layman D."/>
            <person name="Maas J."/>
            <person name="Jaeger S."/>
            <person name="Walker R."/>
            <person name="Wylie K."/>
            <person name="Sekhon M."/>
            <person name="Becker M.C."/>
            <person name="O'Laughlin M.D."/>
            <person name="Schaller M.E."/>
            <person name="Fewell G.A."/>
            <person name="Delehaunty K.D."/>
            <person name="Miner T.L."/>
            <person name="Nash W.E."/>
            <person name="Cordes M."/>
            <person name="Du H."/>
            <person name="Sun H."/>
            <person name="Edwards J."/>
            <person name="Bradshaw-Cordum H."/>
            <person name="Ali J."/>
            <person name="Andrews S."/>
            <person name="Isak A."/>
            <person name="Vanbrunt A."/>
            <person name="Nguyen C."/>
            <person name="Du F."/>
            <person name="Lamar B."/>
            <person name="Courtney L."/>
            <person name="Kalicki J."/>
            <person name="Ozersky P."/>
            <person name="Bielicki L."/>
            <person name="Scott K."/>
            <person name="Holmes A."/>
            <person name="Harkins R."/>
            <person name="Harris A."/>
            <person name="Strong C.M."/>
            <person name="Hou S."/>
            <person name="Tomlinson C."/>
            <person name="Dauphin-Kohlberg S."/>
            <person name="Kozlowicz-Reilly A."/>
            <person name="Leonard S."/>
            <person name="Rohlfing T."/>
            <person name="Rock S.M."/>
            <person name="Tin-Wollam A.-M."/>
            <person name="Abbott A."/>
            <person name="Minx P."/>
            <person name="Maupin R."/>
            <person name="Strowmatt C."/>
            <person name="Latreille P."/>
            <person name="Miller N."/>
            <person name="Johnson D."/>
            <person name="Murray J."/>
            <person name="Woessner J.P."/>
            <person name="Wendl M.C."/>
            <person name="Yang S.-P."/>
            <person name="Schultz B.R."/>
            <person name="Wallis J.W."/>
            <person name="Spieth J."/>
            <person name="Bieri T.A."/>
            <person name="Nelson J.O."/>
            <person name="Berkowicz N."/>
            <person name="Wohldmann P.E."/>
            <person name="Cook L.L."/>
            <person name="Hickenbotham M.T."/>
            <person name="Eldred J."/>
            <person name="Williams D."/>
            <person name="Bedell J.A."/>
            <person name="Mardis E.R."/>
            <person name="Clifton S.W."/>
            <person name="Chissoe S.L."/>
            <person name="Marra M.A."/>
            <person name="Raymond C."/>
            <person name="Haugen E."/>
            <person name="Gillett W."/>
            <person name="Zhou Y."/>
            <person name="James R."/>
            <person name="Phelps K."/>
            <person name="Iadanoto S."/>
            <person name="Bubb K."/>
            <person name="Simms E."/>
            <person name="Levy R."/>
            <person name="Clendenning J."/>
            <person name="Kaul R."/>
            <person name="Kent W.J."/>
            <person name="Furey T.S."/>
            <person name="Baertsch R.A."/>
            <person name="Brent M.R."/>
            <person name="Keibler E."/>
            <person name="Flicek P."/>
            <person name="Bork P."/>
            <person name="Suyama M."/>
            <person name="Bailey J.A."/>
            <person name="Portnoy M.E."/>
            <person name="Torrents D."/>
            <person name="Chinwalla A.T."/>
            <person name="Gish W.R."/>
            <person name="Eddy S.R."/>
            <person name="McPherson J.D."/>
            <person name="Olson M.V."/>
            <person name="Eichler E.E."/>
            <person name="Green E.D."/>
            <person name="Waterston R.H."/>
            <person name="Wilson R.K."/>
        </authorList>
    </citation>
    <scope>NUCLEOTIDE SEQUENCE [LARGE SCALE GENOMIC DNA]</scope>
</reference>
<reference key="4">
    <citation type="journal article" date="2003" name="Science">
        <title>Human chromosome 7: DNA sequence and biology.</title>
        <authorList>
            <person name="Scherer S.W."/>
            <person name="Cheung J."/>
            <person name="MacDonald J.R."/>
            <person name="Osborne L.R."/>
            <person name="Nakabayashi K."/>
            <person name="Herbrick J.-A."/>
            <person name="Carson A.R."/>
            <person name="Parker-Katiraee L."/>
            <person name="Skaug J."/>
            <person name="Khaja R."/>
            <person name="Zhang J."/>
            <person name="Hudek A.K."/>
            <person name="Li M."/>
            <person name="Haddad M."/>
            <person name="Duggan G.E."/>
            <person name="Fernandez B.A."/>
            <person name="Kanematsu E."/>
            <person name="Gentles S."/>
            <person name="Christopoulos C.C."/>
            <person name="Choufani S."/>
            <person name="Kwasnicka D."/>
            <person name="Zheng X.H."/>
            <person name="Lai Z."/>
            <person name="Nusskern D.R."/>
            <person name="Zhang Q."/>
            <person name="Gu Z."/>
            <person name="Lu F."/>
            <person name="Zeesman S."/>
            <person name="Nowaczyk M.J."/>
            <person name="Teshima I."/>
            <person name="Chitayat D."/>
            <person name="Shuman C."/>
            <person name="Weksberg R."/>
            <person name="Zackai E.H."/>
            <person name="Grebe T.A."/>
            <person name="Cox S.R."/>
            <person name="Kirkpatrick S.J."/>
            <person name="Rahman N."/>
            <person name="Friedman J.M."/>
            <person name="Heng H.H.Q."/>
            <person name="Pelicci P.G."/>
            <person name="Lo-Coco F."/>
            <person name="Belloni E."/>
            <person name="Shaffer L.G."/>
            <person name="Pober B."/>
            <person name="Morton C.C."/>
            <person name="Gusella J.F."/>
            <person name="Bruns G.A.P."/>
            <person name="Korf B.R."/>
            <person name="Quade B.J."/>
            <person name="Ligon A.H."/>
            <person name="Ferguson H."/>
            <person name="Higgins A.W."/>
            <person name="Leach N.T."/>
            <person name="Herrick S.R."/>
            <person name="Lemyre E."/>
            <person name="Farra C.G."/>
            <person name="Kim H.-G."/>
            <person name="Summers A.M."/>
            <person name="Gripp K.W."/>
            <person name="Roberts W."/>
            <person name="Szatmari P."/>
            <person name="Winsor E.J.T."/>
            <person name="Grzeschik K.-H."/>
            <person name="Teebi A."/>
            <person name="Minassian B.A."/>
            <person name="Kere J."/>
            <person name="Armengol L."/>
            <person name="Pujana M.A."/>
            <person name="Estivill X."/>
            <person name="Wilson M.D."/>
            <person name="Koop B.F."/>
            <person name="Tosi S."/>
            <person name="Moore G.E."/>
            <person name="Boright A.P."/>
            <person name="Zlotorynski E."/>
            <person name="Kerem B."/>
            <person name="Kroisel P.M."/>
            <person name="Petek E."/>
            <person name="Oscier D.G."/>
            <person name="Mould S.J."/>
            <person name="Doehner H."/>
            <person name="Doehner K."/>
            <person name="Rommens J.M."/>
            <person name="Vincent J.B."/>
            <person name="Venter J.C."/>
            <person name="Li P.W."/>
            <person name="Mural R.J."/>
            <person name="Adams M.D."/>
            <person name="Tsui L.-C."/>
        </authorList>
    </citation>
    <scope>NUCLEOTIDE SEQUENCE [LARGE SCALE GENOMIC DNA]</scope>
</reference>
<reference key="5">
    <citation type="submission" date="2005-07" db="EMBL/GenBank/DDBJ databases">
        <authorList>
            <person name="Mural R.J."/>
            <person name="Istrail S."/>
            <person name="Sutton G.G."/>
            <person name="Florea L."/>
            <person name="Halpern A.L."/>
            <person name="Mobarry C.M."/>
            <person name="Lippert R."/>
            <person name="Walenz B."/>
            <person name="Shatkay H."/>
            <person name="Dew I."/>
            <person name="Miller J.R."/>
            <person name="Flanigan M.J."/>
            <person name="Edwards N.J."/>
            <person name="Bolanos R."/>
            <person name="Fasulo D."/>
            <person name="Halldorsson B.V."/>
            <person name="Hannenhalli S."/>
            <person name="Turner R."/>
            <person name="Yooseph S."/>
            <person name="Lu F."/>
            <person name="Nusskern D.R."/>
            <person name="Shue B.C."/>
            <person name="Zheng X.H."/>
            <person name="Zhong F."/>
            <person name="Delcher A.L."/>
            <person name="Huson D.H."/>
            <person name="Kravitz S.A."/>
            <person name="Mouchard L."/>
            <person name="Reinert K."/>
            <person name="Remington K.A."/>
            <person name="Clark A.G."/>
            <person name="Waterman M.S."/>
            <person name="Eichler E.E."/>
            <person name="Adams M.D."/>
            <person name="Hunkapiller M.W."/>
            <person name="Myers E.W."/>
            <person name="Venter J.C."/>
        </authorList>
    </citation>
    <scope>NUCLEOTIDE SEQUENCE [LARGE SCALE GENOMIC DNA]</scope>
</reference>
<reference key="6">
    <citation type="journal article" date="2004" name="Genome Res.">
        <title>The status, quality, and expansion of the NIH full-length cDNA project: the Mammalian Gene Collection (MGC).</title>
        <authorList>
            <consortium name="The MGC Project Team"/>
        </authorList>
    </citation>
    <scope>NUCLEOTIDE SEQUENCE [LARGE SCALE MRNA] (ISOFORM 1)</scope>
    <source>
        <tissue>Skin</tissue>
    </source>
</reference>
<reference key="7">
    <citation type="submission" date="2004-10" db="UniProtKB">
        <authorList>
            <person name="Bienvenut W.V."/>
        </authorList>
    </citation>
    <scope>PROTEIN SEQUENCE OF 2-10; 155-162; 183-192; 197-208; 454-465; 506-515; 559-571 AND 730-738</scope>
    <scope>CLEAVAGE OF INITIATOR METHIONINE</scope>
    <scope>ACETYLATION AT ALA-2</scope>
    <scope>SUBCELLULAR LOCATION</scope>
    <scope>IDENTIFICATION BY MASS SPECTROMETRY</scope>
    <source>
        <tissue>Cervix carcinoma</tissue>
    </source>
</reference>
<reference key="8">
    <citation type="journal article" date="2006" name="Biol. Chem.">
        <title>Human RBM28 protein is a specific nucleolar component of the spliceosomal snRNPs.</title>
        <authorList>
            <person name="Damianov A."/>
            <person name="Kann M."/>
            <person name="Lane W.S."/>
            <person name="Bindereif A."/>
        </authorList>
    </citation>
    <scope>PROTEIN SEQUENCE OF 17-31; 326-335; 477-486 AND 601-610</scope>
    <scope>FUNCTION</scope>
    <scope>SUBCELLULAR LOCATION</scope>
    <scope>IDENTIFICATION IN A COMPLEX WITH SPLICEOSOMAL SNRNAS U1; U2; U4; U5 AND U6</scope>
</reference>
<reference key="9">
    <citation type="journal article" date="2002" name="Mol. Biol. Cell">
        <title>Functional proteomic analysis of human nucleolus.</title>
        <authorList>
            <person name="Scherl A."/>
            <person name="Coute Y."/>
            <person name="Deon C."/>
            <person name="Calle A."/>
            <person name="Kindbeiter K."/>
            <person name="Sanchez J.-C."/>
            <person name="Greco A."/>
            <person name="Hochstrasser D.F."/>
            <person name="Diaz J.-J."/>
        </authorList>
    </citation>
    <scope>SUBCELLULAR LOCATION [LARGE SCALE ANALYSIS]</scope>
    <source>
        <tissue>Cervix carcinoma</tissue>
    </source>
</reference>
<reference key="10">
    <citation type="journal article" date="2008" name="Proc. Natl. Acad. Sci. U.S.A.">
        <title>A quantitative atlas of mitotic phosphorylation.</title>
        <authorList>
            <person name="Dephoure N."/>
            <person name="Zhou C."/>
            <person name="Villen J."/>
            <person name="Beausoleil S.A."/>
            <person name="Bakalarski C.E."/>
            <person name="Elledge S.J."/>
            <person name="Gygi S.P."/>
        </authorList>
    </citation>
    <scope>PHOSPHORYLATION [LARGE SCALE ANALYSIS] AT SER-122</scope>
    <scope>IDENTIFICATION BY MASS SPECTROMETRY [LARGE SCALE ANALYSIS]</scope>
    <source>
        <tissue>Cervix carcinoma</tissue>
    </source>
</reference>
<reference key="11">
    <citation type="journal article" date="2011" name="BMC Syst. Biol.">
        <title>Initial characterization of the human central proteome.</title>
        <authorList>
            <person name="Burkard T.R."/>
            <person name="Planyavsky M."/>
            <person name="Kaupe I."/>
            <person name="Breitwieser F.P."/>
            <person name="Buerckstuemmer T."/>
            <person name="Bennett K.L."/>
            <person name="Superti-Furga G."/>
            <person name="Colinge J."/>
        </authorList>
    </citation>
    <scope>IDENTIFICATION BY MASS SPECTROMETRY [LARGE SCALE ANALYSIS]</scope>
</reference>
<reference key="12">
    <citation type="journal article" date="2012" name="Proc. Natl. Acad. Sci. U.S.A.">
        <title>N-terminal acetylome analyses and functional insights of the N-terminal acetyltransferase NatB.</title>
        <authorList>
            <person name="Van Damme P."/>
            <person name="Lasa M."/>
            <person name="Polevoda B."/>
            <person name="Gazquez C."/>
            <person name="Elosegui-Artola A."/>
            <person name="Kim D.S."/>
            <person name="De Juan-Pardo E."/>
            <person name="Demeyer K."/>
            <person name="Hole K."/>
            <person name="Larrea E."/>
            <person name="Timmerman E."/>
            <person name="Prieto J."/>
            <person name="Arnesen T."/>
            <person name="Sherman F."/>
            <person name="Gevaert K."/>
            <person name="Aldabe R."/>
        </authorList>
    </citation>
    <scope>IDENTIFICATION BY MASS SPECTROMETRY [LARGE SCALE ANALYSIS]</scope>
</reference>
<reference key="13">
    <citation type="journal article" date="2013" name="J. Proteome Res.">
        <title>Toward a comprehensive characterization of a human cancer cell phosphoproteome.</title>
        <authorList>
            <person name="Zhou H."/>
            <person name="Di Palma S."/>
            <person name="Preisinger C."/>
            <person name="Peng M."/>
            <person name="Polat A.N."/>
            <person name="Heck A.J."/>
            <person name="Mohammed S."/>
        </authorList>
    </citation>
    <scope>PHOSPHORYLATION [LARGE SCALE ANALYSIS] AT SER-397</scope>
    <scope>IDENTIFICATION BY MASS SPECTROMETRY [LARGE SCALE ANALYSIS]</scope>
    <source>
        <tissue>Erythroleukemia</tissue>
    </source>
</reference>
<reference key="14">
    <citation type="journal article" date="2017" name="Nat. Struct. Mol. Biol.">
        <title>Site-specific mapping of the human SUMO proteome reveals co-modification with phosphorylation.</title>
        <authorList>
            <person name="Hendriks I.A."/>
            <person name="Lyon D."/>
            <person name="Young C."/>
            <person name="Jensen L.J."/>
            <person name="Vertegaal A.C."/>
            <person name="Nielsen M.L."/>
        </authorList>
    </citation>
    <scope>SUMOYLATION [LARGE SCALE ANALYSIS] AT LYS-653</scope>
    <scope>IDENTIFICATION BY MASS SPECTROMETRY [LARGE SCALE ANALYSIS]</scope>
</reference>
<reference key="15">
    <citation type="journal article" date="2008" name="Am. J. Hum. Genet.">
        <title>Alopecia, neurological defects, and endocrinopathy syndrome caused by decreased expression of RBM28, a nucleolar protein associated with ribosome biogenesis.</title>
        <authorList>
            <person name="Nousbeck J."/>
            <person name="Spiegel R."/>
            <person name="Ishida-Yamamoto A."/>
            <person name="Indelman M."/>
            <person name="Shani-Adir A."/>
            <person name="Adir N."/>
            <person name="Lipkin E."/>
            <person name="Bercovici S."/>
            <person name="Geiger D."/>
            <person name="van Steensel M.A."/>
            <person name="Steijlen P.M."/>
            <person name="Bergman R."/>
            <person name="Bindereif A."/>
            <person name="Choder M."/>
            <person name="Shalev S."/>
            <person name="Sprecher E."/>
        </authorList>
    </citation>
    <scope>VARIANT ANES PRO-351</scope>
    <scope>TISSUE SPECIFICITY</scope>
</reference>
<proteinExistence type="evidence at protein level"/>
<accession>Q9NW13</accession>
<accession>A4D100</accession>
<accession>B4DU52</accession>
<accession>E9PDD9</accession>
<accession>Q53H65</accession>
<accession>Q96CV3</accession>
<keyword id="KW-0007">Acetylation</keyword>
<keyword id="KW-0025">Alternative splicing</keyword>
<keyword id="KW-0903">Direct protein sequencing</keyword>
<keyword id="KW-0225">Disease variant</keyword>
<keyword id="KW-1063">Hypotrichosis</keyword>
<keyword id="KW-0991">Intellectual disability</keyword>
<keyword id="KW-1017">Isopeptide bond</keyword>
<keyword id="KW-0507">mRNA processing</keyword>
<keyword id="KW-0508">mRNA splicing</keyword>
<keyword id="KW-0539">Nucleus</keyword>
<keyword id="KW-0597">Phosphoprotein</keyword>
<keyword id="KW-1267">Proteomics identification</keyword>
<keyword id="KW-1185">Reference proteome</keyword>
<keyword id="KW-0677">Repeat</keyword>
<keyword id="KW-0694">RNA-binding</keyword>
<keyword id="KW-0747">Spliceosome</keyword>
<keyword id="KW-0832">Ubl conjugation</keyword>
<protein>
    <recommendedName>
        <fullName>RNA-binding protein 28</fullName>
    </recommendedName>
    <alternativeName>
        <fullName>RNA-binding motif protein 28</fullName>
    </alternativeName>
</protein>
<gene>
    <name type="primary">RBM28</name>
</gene>
<organism>
    <name type="scientific">Homo sapiens</name>
    <name type="common">Human</name>
    <dbReference type="NCBI Taxonomy" id="9606"/>
    <lineage>
        <taxon>Eukaryota</taxon>
        <taxon>Metazoa</taxon>
        <taxon>Chordata</taxon>
        <taxon>Craniata</taxon>
        <taxon>Vertebrata</taxon>
        <taxon>Euteleostomi</taxon>
        <taxon>Mammalia</taxon>
        <taxon>Eutheria</taxon>
        <taxon>Euarchontoglires</taxon>
        <taxon>Primates</taxon>
        <taxon>Haplorrhini</taxon>
        <taxon>Catarrhini</taxon>
        <taxon>Hominidae</taxon>
        <taxon>Homo</taxon>
    </lineage>
</organism>
<name>RBM28_HUMAN</name>
<evidence type="ECO:0000255" key="1">
    <source>
        <dbReference type="PROSITE-ProRule" id="PRU00176"/>
    </source>
</evidence>
<evidence type="ECO:0000256" key="2">
    <source>
        <dbReference type="SAM" id="MobiDB-lite"/>
    </source>
</evidence>
<evidence type="ECO:0000269" key="3">
    <source>
    </source>
</evidence>
<evidence type="ECO:0000269" key="4">
    <source>
    </source>
</evidence>
<evidence type="ECO:0000269" key="5">
    <source>
    </source>
</evidence>
<evidence type="ECO:0000269" key="6">
    <source ref="7"/>
</evidence>
<evidence type="ECO:0000303" key="7">
    <source>
    </source>
</evidence>
<evidence type="ECO:0000305" key="8"/>
<evidence type="ECO:0007744" key="9">
    <source>
    </source>
</evidence>
<evidence type="ECO:0007744" key="10">
    <source>
    </source>
</evidence>
<evidence type="ECO:0007744" key="11">
    <source>
    </source>
</evidence>
<comment type="function">
    <text evidence="4">Nucleolar component of the spliceosomal ribonucleoprotein complexes.</text>
</comment>
<comment type="subunit">
    <text evidence="4">Interacts with U1, U2, U4, U5, and U6 spliceosomal small nuclear RNAs (snRNAs).</text>
</comment>
<comment type="interaction">
    <interactant intactId="EBI-2878099">
        <id>Q9NW13</id>
    </interactant>
    <interactant intactId="EBI-356811">
        <id>P46087</id>
        <label>NOP2</label>
    </interactant>
    <organismsDiffer>false</organismsDiffer>
    <experiments>3</experiments>
</comment>
<comment type="interaction">
    <interactant intactId="EBI-2878099">
        <id>Q9NW13</id>
    </interactant>
    <interactant intactId="EBI-358028">
        <id>O76021</id>
        <label>RSL1D1</label>
    </interactant>
    <organismsDiffer>false</organismsDiffer>
    <experiments>2</experiments>
</comment>
<comment type="subcellular location">
    <subcellularLocation>
        <location evidence="3 4 6">Nucleus</location>
        <location evidence="3 4 6">Nucleolus</location>
    </subcellularLocation>
</comment>
<comment type="alternative products">
    <event type="alternative splicing"/>
    <isoform>
        <id>Q9NW13-1</id>
        <name>1</name>
        <sequence type="displayed"/>
    </isoform>
    <isoform>
        <id>Q9NW13-2</id>
        <name>2</name>
        <sequence type="described" ref="VSP_046111"/>
    </isoform>
</comment>
<comment type="tissue specificity">
    <text evidence="5">Ubiquitously expressed.</text>
</comment>
<comment type="disease" evidence="5">
    <disease id="DI-01178">
        <name>Alopecia, neurologic defects, and endocrinopathy syndrome</name>
        <acronym>ANES</acronym>
        <description>Affected individuals have hair loss of variable severity, ranging from complete alopecia to near-normal scalp hair with absence of body hair. All have moderate to severe intellectual disability, progressive motor deterioration and central hypogonadotropic hypogonadism with delayed or absent puberty and central adrenal insufficiency. Additional features included short stature, microcephaly, gynecomastia, pigmentary anomalies, hypodontia, kyphoscoliosis, ulnar deviation of the hands, and loss of subcutaneous fat.</description>
        <dbReference type="MIM" id="612079"/>
    </disease>
    <text>The disease is caused by variants affecting the gene represented in this entry.</text>
</comment>
<sequence length="759" mass="85738">MAGLTLFVGRLPPSARSEQLEELFSQVGPVKQCFVVTEKGSKACRGFGYVTFSMLEDVQRALKEITTFEGCKINVTVAKKKLRNKTKEKGKNENSECPKKEPKAKKAKVADKKARLIIRNLSFKCSEDDLKTVFAQFGAVLEVNIPRKPDGKMRGFGFVQFKNLLEAGKALKGMNMKEIKGRTVAVDWAVAKDKYKDTQSVSAIGEEKSHESKHQESVKKKGREEEDMEEEENDDDDDDDDEEDGVFDDEDEEEENIESKVTKPVQIQKRAVKRPAPAKSSDHSEEDSDLEESDSIDDGEELAQSDTSTEEQEDKAVQVSNKKKRKLPSDVNEGKTVFIRNLSFDSEEEELGELLQQFGELKYVRIVLHPDTEHSKGCAFAQFMTQEAAQKCLLAASPENEAGGLKLDGRQLKVDLAVTRDEAAKLQTTKVKKPTGTRNLYLAREGLIRAGTKAAEGVSAADMAKRERFELLKHQKLKDQNIFVSRTRLCLHNLPKAVDDKQLRKLLLSATSGEKGVRIKECRVMRDLKGVHGNMKGQSLGYAFAEFQEHEHALKALRLINNNPEIFGPLKRPIVEFSLEDRRKLKMKELRIQRSLQKMRSKPATGEPQKGQPEPAKDQQQKAAQHHTEEQSKVPPEQKRKAGSTSWTGFQTKAEVEQVELPDGKKRRKVLALPSHRGPKIRLRDKGKVKPVHPKKPKPQINQWKQEKQQLSSEQVSRKKAKGNKTETRFNQLVEQYKQKLLGPSKGAPLAKRSKWFDS</sequence>
<feature type="initiator methionine" description="Removed" evidence="6">
    <location>
        <position position="1"/>
    </location>
</feature>
<feature type="chain" id="PRO_0000081785" description="RNA-binding protein 28">
    <location>
        <begin position="2"/>
        <end position="759"/>
    </location>
</feature>
<feature type="domain" description="RRM 1" evidence="1">
    <location>
        <begin position="4"/>
        <end position="80"/>
    </location>
</feature>
<feature type="domain" description="RRM 2" evidence="1">
    <location>
        <begin position="114"/>
        <end position="191"/>
    </location>
</feature>
<feature type="domain" description="RRM 3" evidence="1">
    <location>
        <begin position="335"/>
        <end position="419"/>
    </location>
</feature>
<feature type="domain" description="RRM 4" evidence="1">
    <location>
        <begin position="487"/>
        <end position="597"/>
    </location>
</feature>
<feature type="region of interest" description="Disordered" evidence="2">
    <location>
        <begin position="84"/>
        <end position="105"/>
    </location>
</feature>
<feature type="region of interest" description="Disordered" evidence="2">
    <location>
        <begin position="201"/>
        <end position="330"/>
    </location>
</feature>
<feature type="region of interest" description="Disordered" evidence="2">
    <location>
        <begin position="594"/>
        <end position="759"/>
    </location>
</feature>
<feature type="compositionally biased region" description="Basic and acidic residues" evidence="2">
    <location>
        <begin position="85"/>
        <end position="101"/>
    </location>
</feature>
<feature type="compositionally biased region" description="Basic and acidic residues" evidence="2">
    <location>
        <begin position="205"/>
        <end position="224"/>
    </location>
</feature>
<feature type="compositionally biased region" description="Acidic residues" evidence="2">
    <location>
        <begin position="225"/>
        <end position="256"/>
    </location>
</feature>
<feature type="compositionally biased region" description="Acidic residues" evidence="2">
    <location>
        <begin position="284"/>
        <end position="313"/>
    </location>
</feature>
<feature type="compositionally biased region" description="Basic and acidic residues" evidence="2">
    <location>
        <begin position="615"/>
        <end position="640"/>
    </location>
</feature>
<feature type="compositionally biased region" description="Basic residues" evidence="2">
    <location>
        <begin position="689"/>
        <end position="698"/>
    </location>
</feature>
<feature type="compositionally biased region" description="Polar residues" evidence="2">
    <location>
        <begin position="700"/>
        <end position="715"/>
    </location>
</feature>
<feature type="modified residue" description="N-acetylalanine" evidence="6">
    <location>
        <position position="2"/>
    </location>
</feature>
<feature type="modified residue" description="Phosphoserine" evidence="9">
    <location>
        <position position="122"/>
    </location>
</feature>
<feature type="modified residue" description="Phosphoserine" evidence="10">
    <location>
        <position position="397"/>
    </location>
</feature>
<feature type="cross-link" description="Glycyl lysine isopeptide (Lys-Gly) (interchain with G-Cter in SUMO2)" evidence="11">
    <location>
        <position position="653"/>
    </location>
</feature>
<feature type="splice variant" id="VSP_046111" description="In isoform 2." evidence="7">
    <location>
        <begin position="39"/>
        <end position="179"/>
    </location>
</feature>
<feature type="sequence variant" id="VAR_045654" description="In dbSNP:rs11554671.">
    <original>E</original>
    <variation>Q</variation>
    <location>
        <position position="253"/>
    </location>
</feature>
<feature type="sequence variant" id="VAR_045655" description="In ANES; dbSNP:rs118204055." evidence="5">
    <original>L</original>
    <variation>P</variation>
    <location>
        <position position="351"/>
    </location>
</feature>
<feature type="sequence conflict" description="In Ref. 2; BAD96436." evidence="8" ref="2">
    <original>E</original>
    <variation>G</variation>
    <location>
        <position position="21"/>
    </location>
</feature>
<feature type="sequence conflict" description="In Ref. 1; BAG62214." evidence="8" ref="1">
    <original>L</original>
    <variation>P</variation>
    <location>
        <position position="361"/>
    </location>
</feature>
<feature type="sequence conflict" description="In Ref. 1; BAG62214." evidence="8" ref="1">
    <original>R</original>
    <variation>K</variation>
    <location>
        <position position="668"/>
    </location>
</feature>
<feature type="sequence conflict" description="In Ref. 1; BAA91575." evidence="8" ref="1">
    <original>Q</original>
    <variation>R</variation>
    <location>
        <position position="739"/>
    </location>
</feature>